<evidence type="ECO:0000250" key="1"/>
<evidence type="ECO:0000255" key="2"/>
<evidence type="ECO:0000255" key="3">
    <source>
        <dbReference type="PROSITE-ProRule" id="PRU00175"/>
    </source>
</evidence>
<evidence type="ECO:0000256" key="4">
    <source>
        <dbReference type="SAM" id="MobiDB-lite"/>
    </source>
</evidence>
<evidence type="ECO:0000305" key="5"/>
<protein>
    <recommendedName>
        <fullName>RING-H2 finger protein ATL33</fullName>
        <ecNumber evidence="5">2.3.2.27</ecNumber>
    </recommendedName>
    <alternativeName>
        <fullName evidence="5">RING-type E3 ubiquitin transferase ATL33</fullName>
    </alternativeName>
</protein>
<keyword id="KW-0472">Membrane</keyword>
<keyword id="KW-0479">Metal-binding</keyword>
<keyword id="KW-1185">Reference proteome</keyword>
<keyword id="KW-0808">Transferase</keyword>
<keyword id="KW-0812">Transmembrane</keyword>
<keyword id="KW-1133">Transmembrane helix</keyword>
<keyword id="KW-0833">Ubl conjugation pathway</keyword>
<keyword id="KW-0862">Zinc</keyword>
<keyword id="KW-0863">Zinc-finger</keyword>
<accession>O80927</accession>
<accession>Q29PQ7</accession>
<reference key="1">
    <citation type="journal article" date="1999" name="Nature">
        <title>Sequence and analysis of chromosome 2 of the plant Arabidopsis thaliana.</title>
        <authorList>
            <person name="Lin X."/>
            <person name="Kaul S."/>
            <person name="Rounsley S.D."/>
            <person name="Shea T.P."/>
            <person name="Benito M.-I."/>
            <person name="Town C.D."/>
            <person name="Fujii C.Y."/>
            <person name="Mason T.M."/>
            <person name="Bowman C.L."/>
            <person name="Barnstead M.E."/>
            <person name="Feldblyum T.V."/>
            <person name="Buell C.R."/>
            <person name="Ketchum K.A."/>
            <person name="Lee J.J."/>
            <person name="Ronning C.M."/>
            <person name="Koo H.L."/>
            <person name="Moffat K.S."/>
            <person name="Cronin L.A."/>
            <person name="Shen M."/>
            <person name="Pai G."/>
            <person name="Van Aken S."/>
            <person name="Umayam L."/>
            <person name="Tallon L.J."/>
            <person name="Gill J.E."/>
            <person name="Adams M.D."/>
            <person name="Carrera A.J."/>
            <person name="Creasy T.H."/>
            <person name="Goodman H.M."/>
            <person name="Somerville C.R."/>
            <person name="Copenhaver G.P."/>
            <person name="Preuss D."/>
            <person name="Nierman W.C."/>
            <person name="White O."/>
            <person name="Eisen J.A."/>
            <person name="Salzberg S.L."/>
            <person name="Fraser C.M."/>
            <person name="Venter J.C."/>
        </authorList>
    </citation>
    <scope>NUCLEOTIDE SEQUENCE [LARGE SCALE GENOMIC DNA]</scope>
    <source>
        <strain>cv. Columbia</strain>
    </source>
</reference>
<reference key="2">
    <citation type="journal article" date="2017" name="Plant J.">
        <title>Araport11: a complete reannotation of the Arabidopsis thaliana reference genome.</title>
        <authorList>
            <person name="Cheng C.Y."/>
            <person name="Krishnakumar V."/>
            <person name="Chan A.P."/>
            <person name="Thibaud-Nissen F."/>
            <person name="Schobel S."/>
            <person name="Town C.D."/>
        </authorList>
    </citation>
    <scope>GENOME REANNOTATION</scope>
    <source>
        <strain>cv. Columbia</strain>
    </source>
</reference>
<reference key="3">
    <citation type="submission" date="2006-03" db="EMBL/GenBank/DDBJ databases">
        <title>Arabidopsis ORF clones.</title>
        <authorList>
            <person name="Kim C.J."/>
            <person name="Chen H."/>
            <person name="Shinn P."/>
            <person name="Ecker J.R."/>
        </authorList>
    </citation>
    <scope>NUCLEOTIDE SEQUENCE [LARGE SCALE MRNA]</scope>
    <source>
        <strain>cv. Columbia</strain>
    </source>
</reference>
<reference key="4">
    <citation type="submission" date="2002-03" db="EMBL/GenBank/DDBJ databases">
        <title>Full-length cDNA from Arabidopsis thaliana.</title>
        <authorList>
            <person name="Brover V.V."/>
            <person name="Troukhan M.E."/>
            <person name="Alexandrov N.A."/>
            <person name="Lu Y.-P."/>
            <person name="Flavell R.B."/>
            <person name="Feldmann K.A."/>
        </authorList>
    </citation>
    <scope>NUCLEOTIDE SEQUENCE [LARGE SCALE MRNA]</scope>
</reference>
<reference key="5">
    <citation type="journal article" date="2002" name="Genome Biol.">
        <title>Evaluation and classification of RING-finger domains encoded by the Arabidopsis genome.</title>
        <authorList>
            <person name="Kosarev P."/>
            <person name="Mayer K.F.X."/>
            <person name="Hardtke C.S."/>
        </authorList>
    </citation>
    <scope>GENE FAMILY ORGANIZATION</scope>
</reference>
<reference key="6">
    <citation type="journal article" date="2006" name="J. Mol. Evol.">
        <title>The ATL gene family from Arabidopsis thaliana and Oryza sativa comprises a large number of putative ubiquitin ligases of the RING-H2 type.</title>
        <authorList>
            <person name="Serrano M."/>
            <person name="Parra S."/>
            <person name="Alcaraz L.D."/>
            <person name="Guzman P."/>
        </authorList>
    </citation>
    <scope>NOMENCLATURE</scope>
    <scope>GENE FAMILY ORGANIZATION</scope>
</reference>
<dbReference type="EC" id="2.3.2.27" evidence="5"/>
<dbReference type="EMBL" id="AC004684">
    <property type="protein sequence ID" value="AAC23649.2"/>
    <property type="molecule type" value="Genomic_DNA"/>
</dbReference>
<dbReference type="EMBL" id="CP002685">
    <property type="protein sequence ID" value="AEC09420.1"/>
    <property type="molecule type" value="Genomic_DNA"/>
</dbReference>
<dbReference type="EMBL" id="BT024849">
    <property type="protein sequence ID" value="ABD60732.1"/>
    <property type="molecule type" value="mRNA"/>
</dbReference>
<dbReference type="EMBL" id="AY084758">
    <property type="protein sequence ID" value="AAM61327.1"/>
    <property type="molecule type" value="mRNA"/>
</dbReference>
<dbReference type="PIR" id="T02524">
    <property type="entry name" value="T02524"/>
</dbReference>
<dbReference type="RefSeq" id="NP_565865.1">
    <property type="nucleotide sequence ID" value="NM_129313.2"/>
</dbReference>
<dbReference type="SMR" id="O80927"/>
<dbReference type="FunCoup" id="O80927">
    <property type="interactions" value="1"/>
</dbReference>
<dbReference type="GlyGen" id="O80927">
    <property type="glycosylation" value="1 site"/>
</dbReference>
<dbReference type="PaxDb" id="3702-AT2G37580.1"/>
<dbReference type="ProteomicsDB" id="246562"/>
<dbReference type="EnsemblPlants" id="AT2G37580.1">
    <property type="protein sequence ID" value="AT2G37580.1"/>
    <property type="gene ID" value="AT2G37580"/>
</dbReference>
<dbReference type="GeneID" id="818334"/>
<dbReference type="Gramene" id="AT2G37580.1">
    <property type="protein sequence ID" value="AT2G37580.1"/>
    <property type="gene ID" value="AT2G37580"/>
</dbReference>
<dbReference type="KEGG" id="ath:AT2G37580"/>
<dbReference type="Araport" id="AT2G37580"/>
<dbReference type="TAIR" id="AT2G37580">
    <property type="gene designation" value="ATL33"/>
</dbReference>
<dbReference type="eggNOG" id="KOG0800">
    <property type="taxonomic scope" value="Eukaryota"/>
</dbReference>
<dbReference type="HOGENOM" id="CLU_013137_15_0_1"/>
<dbReference type="InParanoid" id="O80927"/>
<dbReference type="OMA" id="TSRDDDW"/>
<dbReference type="OrthoDB" id="8062037at2759"/>
<dbReference type="PhylomeDB" id="O80927"/>
<dbReference type="UniPathway" id="UPA00143"/>
<dbReference type="PRO" id="PR:O80927"/>
<dbReference type="Proteomes" id="UP000006548">
    <property type="component" value="Chromosome 2"/>
</dbReference>
<dbReference type="ExpressionAtlas" id="O80927">
    <property type="expression patterns" value="baseline and differential"/>
</dbReference>
<dbReference type="GO" id="GO:0016020">
    <property type="term" value="C:membrane"/>
    <property type="evidence" value="ECO:0007669"/>
    <property type="project" value="UniProtKB-SubCell"/>
</dbReference>
<dbReference type="GO" id="GO:0016740">
    <property type="term" value="F:transferase activity"/>
    <property type="evidence" value="ECO:0007669"/>
    <property type="project" value="UniProtKB-KW"/>
</dbReference>
<dbReference type="GO" id="GO:0008270">
    <property type="term" value="F:zinc ion binding"/>
    <property type="evidence" value="ECO:0007669"/>
    <property type="project" value="UniProtKB-KW"/>
</dbReference>
<dbReference type="GO" id="GO:0016567">
    <property type="term" value="P:protein ubiquitination"/>
    <property type="evidence" value="ECO:0007669"/>
    <property type="project" value="UniProtKB-UniPathway"/>
</dbReference>
<dbReference type="Gene3D" id="3.30.40.10">
    <property type="entry name" value="Zinc/RING finger domain, C3HC4 (zinc finger)"/>
    <property type="match status" value="1"/>
</dbReference>
<dbReference type="InterPro" id="IPR044600">
    <property type="entry name" value="ATL1/ATL16-like"/>
</dbReference>
<dbReference type="InterPro" id="IPR001841">
    <property type="entry name" value="Znf_RING"/>
</dbReference>
<dbReference type="InterPro" id="IPR013083">
    <property type="entry name" value="Znf_RING/FYVE/PHD"/>
</dbReference>
<dbReference type="PANTHER" id="PTHR46913">
    <property type="entry name" value="RING-H2 FINGER PROTEIN ATL16"/>
    <property type="match status" value="1"/>
</dbReference>
<dbReference type="PANTHER" id="PTHR46913:SF1">
    <property type="entry name" value="RING-H2 FINGER PROTEIN ATL16"/>
    <property type="match status" value="1"/>
</dbReference>
<dbReference type="Pfam" id="PF13639">
    <property type="entry name" value="zf-RING_2"/>
    <property type="match status" value="1"/>
</dbReference>
<dbReference type="SMART" id="SM00184">
    <property type="entry name" value="RING"/>
    <property type="match status" value="1"/>
</dbReference>
<dbReference type="SUPFAM" id="SSF57850">
    <property type="entry name" value="RING/U-box"/>
    <property type="match status" value="1"/>
</dbReference>
<dbReference type="PROSITE" id="PS50089">
    <property type="entry name" value="ZF_RING_2"/>
    <property type="match status" value="1"/>
</dbReference>
<name>ATL33_ARATH</name>
<sequence>MFNNTTTSFGSGPGIVVVPTPATTVPTTDFPGTTITSNSTFIIIGPPPPFPAPPRSIDLTPLKLIFVVIAFVAVPALVYALFFNGPCSSSRRNSSSSRTSSSSDDTPHATVDTPPITETTVTSESGGKFHKDTHSKEIGNECSVCLMVFTDSDELRQLSECKHAFHVLCIETWLKDHPNCPICRTDVSVKQQTEAPNVPVNVNGNVNRSGGNRRVSATSRDDDWRQGLPDASSLV</sequence>
<feature type="chain" id="PRO_0000055782" description="RING-H2 finger protein ATL33">
    <location>
        <begin position="1"/>
        <end position="235"/>
    </location>
</feature>
<feature type="transmembrane region" description="Helical" evidence="2">
    <location>
        <begin position="64"/>
        <end position="84"/>
    </location>
</feature>
<feature type="zinc finger region" description="RING-type; atypical" evidence="3">
    <location>
        <begin position="142"/>
        <end position="184"/>
    </location>
</feature>
<feature type="region of interest" description="Disordered" evidence="4">
    <location>
        <begin position="87"/>
        <end position="133"/>
    </location>
</feature>
<feature type="region of interest" description="Disordered" evidence="4">
    <location>
        <begin position="201"/>
        <end position="235"/>
    </location>
</feature>
<feature type="compositionally biased region" description="Low complexity" evidence="4">
    <location>
        <begin position="88"/>
        <end position="103"/>
    </location>
</feature>
<feature type="compositionally biased region" description="Polar residues" evidence="4">
    <location>
        <begin position="116"/>
        <end position="125"/>
    </location>
</feature>
<feature type="compositionally biased region" description="Low complexity" evidence="4">
    <location>
        <begin position="201"/>
        <end position="216"/>
    </location>
</feature>
<proteinExistence type="evidence at transcript level"/>
<organism>
    <name type="scientific">Arabidopsis thaliana</name>
    <name type="common">Mouse-ear cress</name>
    <dbReference type="NCBI Taxonomy" id="3702"/>
    <lineage>
        <taxon>Eukaryota</taxon>
        <taxon>Viridiplantae</taxon>
        <taxon>Streptophyta</taxon>
        <taxon>Embryophyta</taxon>
        <taxon>Tracheophyta</taxon>
        <taxon>Spermatophyta</taxon>
        <taxon>Magnoliopsida</taxon>
        <taxon>eudicotyledons</taxon>
        <taxon>Gunneridae</taxon>
        <taxon>Pentapetalae</taxon>
        <taxon>rosids</taxon>
        <taxon>malvids</taxon>
        <taxon>Brassicales</taxon>
        <taxon>Brassicaceae</taxon>
        <taxon>Camelineae</taxon>
        <taxon>Arabidopsis</taxon>
    </lineage>
</organism>
<comment type="catalytic activity">
    <reaction evidence="5">
        <text>S-ubiquitinyl-[E2 ubiquitin-conjugating enzyme]-L-cysteine + [acceptor protein]-L-lysine = [E2 ubiquitin-conjugating enzyme]-L-cysteine + N(6)-ubiquitinyl-[acceptor protein]-L-lysine.</text>
        <dbReference type="EC" id="2.3.2.27"/>
    </reaction>
</comment>
<comment type="pathway">
    <text>Protein modification; protein ubiquitination.</text>
</comment>
<comment type="subcellular location">
    <subcellularLocation>
        <location evidence="5">Membrane</location>
        <topology evidence="5">Single-pass membrane protein</topology>
    </subcellularLocation>
</comment>
<comment type="domain">
    <text evidence="1">The RING-type zinc finger domain mediates binding to an E2 ubiquitin-conjugating enzyme.</text>
</comment>
<comment type="similarity">
    <text evidence="5">Belongs to the RING-type zinc finger family. ATL subfamily.</text>
</comment>
<gene>
    <name type="primary">ATL33</name>
    <name type="ordered locus">At2g37580</name>
    <name type="ORF">F13M22.1</name>
</gene>